<reference key="1">
    <citation type="journal article" date="2002" name="Nature">
        <title>The genome sequence of Schizosaccharomyces pombe.</title>
        <authorList>
            <person name="Wood V."/>
            <person name="Gwilliam R."/>
            <person name="Rajandream M.A."/>
            <person name="Lyne M.H."/>
            <person name="Lyne R."/>
            <person name="Stewart A."/>
            <person name="Sgouros J.G."/>
            <person name="Peat N."/>
            <person name="Hayles J."/>
            <person name="Baker S.G."/>
            <person name="Basham D."/>
            <person name="Bowman S."/>
            <person name="Brooks K."/>
            <person name="Brown D."/>
            <person name="Brown S."/>
            <person name="Chillingworth T."/>
            <person name="Churcher C.M."/>
            <person name="Collins M."/>
            <person name="Connor R."/>
            <person name="Cronin A."/>
            <person name="Davis P."/>
            <person name="Feltwell T."/>
            <person name="Fraser A."/>
            <person name="Gentles S."/>
            <person name="Goble A."/>
            <person name="Hamlin N."/>
            <person name="Harris D.E."/>
            <person name="Hidalgo J."/>
            <person name="Hodgson G."/>
            <person name="Holroyd S."/>
            <person name="Hornsby T."/>
            <person name="Howarth S."/>
            <person name="Huckle E.J."/>
            <person name="Hunt S."/>
            <person name="Jagels K."/>
            <person name="James K.D."/>
            <person name="Jones L."/>
            <person name="Jones M."/>
            <person name="Leather S."/>
            <person name="McDonald S."/>
            <person name="McLean J."/>
            <person name="Mooney P."/>
            <person name="Moule S."/>
            <person name="Mungall K.L."/>
            <person name="Murphy L.D."/>
            <person name="Niblett D."/>
            <person name="Odell C."/>
            <person name="Oliver K."/>
            <person name="O'Neil S."/>
            <person name="Pearson D."/>
            <person name="Quail M.A."/>
            <person name="Rabbinowitsch E."/>
            <person name="Rutherford K.M."/>
            <person name="Rutter S."/>
            <person name="Saunders D."/>
            <person name="Seeger K."/>
            <person name="Sharp S."/>
            <person name="Skelton J."/>
            <person name="Simmonds M.N."/>
            <person name="Squares R."/>
            <person name="Squares S."/>
            <person name="Stevens K."/>
            <person name="Taylor K."/>
            <person name="Taylor R.G."/>
            <person name="Tivey A."/>
            <person name="Walsh S.V."/>
            <person name="Warren T."/>
            <person name="Whitehead S."/>
            <person name="Woodward J.R."/>
            <person name="Volckaert G."/>
            <person name="Aert R."/>
            <person name="Robben J."/>
            <person name="Grymonprez B."/>
            <person name="Weltjens I."/>
            <person name="Vanstreels E."/>
            <person name="Rieger M."/>
            <person name="Schaefer M."/>
            <person name="Mueller-Auer S."/>
            <person name="Gabel C."/>
            <person name="Fuchs M."/>
            <person name="Duesterhoeft A."/>
            <person name="Fritzc C."/>
            <person name="Holzer E."/>
            <person name="Moestl D."/>
            <person name="Hilbert H."/>
            <person name="Borzym K."/>
            <person name="Langer I."/>
            <person name="Beck A."/>
            <person name="Lehrach H."/>
            <person name="Reinhardt R."/>
            <person name="Pohl T.M."/>
            <person name="Eger P."/>
            <person name="Zimmermann W."/>
            <person name="Wedler H."/>
            <person name="Wambutt R."/>
            <person name="Purnelle B."/>
            <person name="Goffeau A."/>
            <person name="Cadieu E."/>
            <person name="Dreano S."/>
            <person name="Gloux S."/>
            <person name="Lelaure V."/>
            <person name="Mottier S."/>
            <person name="Galibert F."/>
            <person name="Aves S.J."/>
            <person name="Xiang Z."/>
            <person name="Hunt C."/>
            <person name="Moore K."/>
            <person name="Hurst S.M."/>
            <person name="Lucas M."/>
            <person name="Rochet M."/>
            <person name="Gaillardin C."/>
            <person name="Tallada V.A."/>
            <person name="Garzon A."/>
            <person name="Thode G."/>
            <person name="Daga R.R."/>
            <person name="Cruzado L."/>
            <person name="Jimenez J."/>
            <person name="Sanchez M."/>
            <person name="del Rey F."/>
            <person name="Benito J."/>
            <person name="Dominguez A."/>
            <person name="Revuelta J.L."/>
            <person name="Moreno S."/>
            <person name="Armstrong J."/>
            <person name="Forsburg S.L."/>
            <person name="Cerutti L."/>
            <person name="Lowe T."/>
            <person name="McCombie W.R."/>
            <person name="Paulsen I."/>
            <person name="Potashkin J."/>
            <person name="Shpakovski G.V."/>
            <person name="Ussery D."/>
            <person name="Barrell B.G."/>
            <person name="Nurse P."/>
        </authorList>
    </citation>
    <scope>NUCLEOTIDE SEQUENCE [LARGE SCALE GENOMIC DNA]</scope>
    <source>
        <strain>972 / ATCC 24843</strain>
    </source>
</reference>
<reference key="2">
    <citation type="journal article" date="2011" name="Science">
        <title>Comparative functional genomics of the fission yeasts.</title>
        <authorList>
            <person name="Rhind N."/>
            <person name="Chen Z."/>
            <person name="Yassour M."/>
            <person name="Thompson D.A."/>
            <person name="Haas B.J."/>
            <person name="Habib N."/>
            <person name="Wapinski I."/>
            <person name="Roy S."/>
            <person name="Lin M.F."/>
            <person name="Heiman D.I."/>
            <person name="Young S.K."/>
            <person name="Furuya K."/>
            <person name="Guo Y."/>
            <person name="Pidoux A."/>
            <person name="Chen H.M."/>
            <person name="Robbertse B."/>
            <person name="Goldberg J.M."/>
            <person name="Aoki K."/>
            <person name="Bayne E.H."/>
            <person name="Berlin A.M."/>
            <person name="Desjardins C.A."/>
            <person name="Dobbs E."/>
            <person name="Dukaj L."/>
            <person name="Fan L."/>
            <person name="FitzGerald M.G."/>
            <person name="French C."/>
            <person name="Gujja S."/>
            <person name="Hansen K."/>
            <person name="Keifenheim D."/>
            <person name="Levin J.Z."/>
            <person name="Mosher R.A."/>
            <person name="Mueller C.A."/>
            <person name="Pfiffner J."/>
            <person name="Priest M."/>
            <person name="Russ C."/>
            <person name="Smialowska A."/>
            <person name="Swoboda P."/>
            <person name="Sykes S.M."/>
            <person name="Vaughn M."/>
            <person name="Vengrova S."/>
            <person name="Yoder R."/>
            <person name="Zeng Q."/>
            <person name="Allshire R."/>
            <person name="Baulcombe D."/>
            <person name="Birren B.W."/>
            <person name="Brown W."/>
            <person name="Ekwall K."/>
            <person name="Kellis M."/>
            <person name="Leatherwood J."/>
            <person name="Levin H."/>
            <person name="Margalit H."/>
            <person name="Martienssen R."/>
            <person name="Nieduszynski C.A."/>
            <person name="Spatafora J.W."/>
            <person name="Friedman N."/>
            <person name="Dalgaard J.Z."/>
            <person name="Baumann P."/>
            <person name="Niki H."/>
            <person name="Regev A."/>
            <person name="Nusbaum C."/>
        </authorList>
    </citation>
    <scope>REVISION OF GENE MODEL</scope>
</reference>
<reference key="3">
    <citation type="journal article" date="2006" name="Eukaryot. Cell">
        <title>A transcription factor cascade involving Fep1 and the CCAAT-binding factor Php4 regulates gene expression in response to iron deficiency in the fission yeast Schizosaccharomyces pombe.</title>
        <authorList>
            <person name="Mercier A."/>
            <person name="Pelletier B."/>
            <person name="Labbe S."/>
        </authorList>
    </citation>
    <scope>INDUCTION</scope>
</reference>
<reference key="4">
    <citation type="journal article" date="2006" name="Nat. Biotechnol.">
        <title>ORFeome cloning and global analysis of protein localization in the fission yeast Schizosaccharomyces pombe.</title>
        <authorList>
            <person name="Matsuyama A."/>
            <person name="Arai R."/>
            <person name="Yashiroda Y."/>
            <person name="Shirai A."/>
            <person name="Kamata A."/>
            <person name="Sekido S."/>
            <person name="Kobayashi Y."/>
            <person name="Hashimoto A."/>
            <person name="Hamamoto M."/>
            <person name="Hiraoka Y."/>
            <person name="Horinouchi S."/>
            <person name="Yoshida M."/>
        </authorList>
    </citation>
    <scope>SUBCELLULAR LOCATION [LARGE SCALE ANALYSIS]</scope>
</reference>
<sequence>MLQTRLGLGALRQGRLLFAVKSFSTTSVAKIFPPPPQTIKGTVNDAAVFPHHSKLHGSYHWDFERIIAIAMVPQVMIPLFTGTSHPLMDAALACTLITHAHLGFESCVIDYFPARRFKKLSPLMHWILRGCTVLTLIGVYEFNTNDIGLTEGIKKLWKS</sequence>
<feature type="transit peptide" description="Mitochondrion" evidence="2">
    <location>
        <begin position="1"/>
        <end position="30"/>
    </location>
</feature>
<feature type="chain" id="PRO_0000006495" description="Succinate dehydrogenase [ubiquinone] cytochrome b small subunit, mitochondrial">
    <location>
        <begin position="31"/>
        <end position="159"/>
    </location>
</feature>
<feature type="topological domain" description="Mitochondrial matrix" evidence="2">
    <location>
        <begin position="31"/>
        <end position="65"/>
    </location>
</feature>
<feature type="transmembrane region" description="Helical" evidence="2">
    <location>
        <begin position="66"/>
        <end position="82"/>
    </location>
</feature>
<feature type="topological domain" description="Mitochondrial intermembrane" evidence="2">
    <location>
        <begin position="83"/>
        <end position="89"/>
    </location>
</feature>
<feature type="transmembrane region" description="Helical" evidence="2">
    <location>
        <begin position="90"/>
        <end position="109"/>
    </location>
</feature>
<feature type="topological domain" description="Mitochondrial matrix" evidence="2">
    <location>
        <begin position="110"/>
        <end position="122"/>
    </location>
</feature>
<feature type="transmembrane region" description="Helical" evidence="2">
    <location>
        <begin position="123"/>
        <end position="140"/>
    </location>
</feature>
<feature type="topological domain" description="Mitochondrial intermembrane" evidence="2">
    <location>
        <begin position="141"/>
        <end position="159"/>
    </location>
</feature>
<feature type="binding site" description="axial binding residue" evidence="1">
    <location>
        <position position="99"/>
    </location>
    <ligand>
        <name>heme</name>
        <dbReference type="ChEBI" id="CHEBI:30413"/>
        <note>ligand shared with large subunit</note>
    </ligand>
    <ligandPart>
        <name>Fe</name>
        <dbReference type="ChEBI" id="CHEBI:18248"/>
    </ligandPart>
</feature>
<feature type="binding site" evidence="1">
    <location>
        <position position="111"/>
    </location>
    <ligand>
        <name>a ubiquinone</name>
        <dbReference type="ChEBI" id="CHEBI:16389"/>
        <note>ligand shared with IP</note>
    </ligand>
</feature>
<protein>
    <recommendedName>
        <fullName>Succinate dehydrogenase [ubiquinone] cytochrome b small subunit, mitochondrial</fullName>
        <shortName>CybS</shortName>
    </recommendedName>
    <alternativeName>
        <fullName>Succinate-ubiquinone reductase membrane anchor subunit</fullName>
    </alternativeName>
</protein>
<evidence type="ECO:0000250" key="1"/>
<evidence type="ECO:0000255" key="2"/>
<evidence type="ECO:0000269" key="3">
    <source>
    </source>
</evidence>
<evidence type="ECO:0000269" key="4">
    <source>
    </source>
</evidence>
<evidence type="ECO:0000305" key="5"/>
<proteinExistence type="evidence at transcript level"/>
<dbReference type="EMBL" id="CU329671">
    <property type="protein sequence ID" value="CAB66444.2"/>
    <property type="molecule type" value="Genomic_DNA"/>
</dbReference>
<dbReference type="PIR" id="T50403">
    <property type="entry name" value="T50403"/>
</dbReference>
<dbReference type="RefSeq" id="NP_595828.2">
    <property type="nucleotide sequence ID" value="NM_001021732.2"/>
</dbReference>
<dbReference type="SMR" id="Q9P7X0"/>
<dbReference type="BioGRID" id="277804">
    <property type="interactions" value="181"/>
</dbReference>
<dbReference type="ComplexPortal" id="CPX-566">
    <property type="entry name" value="Mitochondrial respiratory chain complex II"/>
</dbReference>
<dbReference type="FunCoup" id="Q9P7X0">
    <property type="interactions" value="203"/>
</dbReference>
<dbReference type="STRING" id="284812.Q9P7X0"/>
<dbReference type="iPTMnet" id="Q9P7X0"/>
<dbReference type="PaxDb" id="4896-SPBP23A10.16.1"/>
<dbReference type="EnsemblFungi" id="SPBP23A10.16.1">
    <property type="protein sequence ID" value="SPBP23A10.16.1:pep"/>
    <property type="gene ID" value="SPBP23A10.16"/>
</dbReference>
<dbReference type="GeneID" id="2541292"/>
<dbReference type="KEGG" id="spo:2541292"/>
<dbReference type="PomBase" id="SPBP23A10.16">
    <property type="gene designation" value="sdh4"/>
</dbReference>
<dbReference type="VEuPathDB" id="FungiDB:SPBP23A10.16"/>
<dbReference type="eggNOG" id="KOG4097">
    <property type="taxonomic scope" value="Eukaryota"/>
</dbReference>
<dbReference type="HOGENOM" id="CLU_096618_0_2_1"/>
<dbReference type="InParanoid" id="Q9P7X0"/>
<dbReference type="OMA" id="SEGSYHW"/>
<dbReference type="Reactome" id="R-SPO-71403">
    <property type="pathway name" value="Citric acid cycle (TCA cycle)"/>
</dbReference>
<dbReference type="UniPathway" id="UPA00223"/>
<dbReference type="PRO" id="PR:Q9P7X0"/>
<dbReference type="Proteomes" id="UP000002485">
    <property type="component" value="Chromosome II"/>
</dbReference>
<dbReference type="GO" id="GO:0005743">
    <property type="term" value="C:mitochondrial inner membrane"/>
    <property type="evidence" value="ECO:0000250"/>
    <property type="project" value="UniProtKB"/>
</dbReference>
<dbReference type="GO" id="GO:0005739">
    <property type="term" value="C:mitochondrion"/>
    <property type="evidence" value="ECO:0007005"/>
    <property type="project" value="PomBase"/>
</dbReference>
<dbReference type="GO" id="GO:0045273">
    <property type="term" value="C:respiratory chain complex II (succinate dehydrogenase)"/>
    <property type="evidence" value="ECO:0000250"/>
    <property type="project" value="UniProtKB"/>
</dbReference>
<dbReference type="GO" id="GO:0042721">
    <property type="term" value="C:TIM22 mitochondrial import inner membrane insertion complex"/>
    <property type="evidence" value="ECO:0000250"/>
    <property type="project" value="PomBase"/>
</dbReference>
<dbReference type="GO" id="GO:0020037">
    <property type="term" value="F:heme binding"/>
    <property type="evidence" value="ECO:0000250"/>
    <property type="project" value="UniProtKB"/>
</dbReference>
<dbReference type="GO" id="GO:0046872">
    <property type="term" value="F:metal ion binding"/>
    <property type="evidence" value="ECO:0007669"/>
    <property type="project" value="UniProtKB-KW"/>
</dbReference>
<dbReference type="GO" id="GO:0043495">
    <property type="term" value="F:protein-membrane adaptor activity"/>
    <property type="evidence" value="ECO:0000303"/>
    <property type="project" value="PomBase"/>
</dbReference>
<dbReference type="GO" id="GO:0048039">
    <property type="term" value="F:ubiquinone binding"/>
    <property type="evidence" value="ECO:0000250"/>
    <property type="project" value="UniProtKB"/>
</dbReference>
<dbReference type="GO" id="GO:0006121">
    <property type="term" value="P:mitochondrial electron transport, succinate to ubiquinone"/>
    <property type="evidence" value="ECO:0000266"/>
    <property type="project" value="PomBase"/>
</dbReference>
<dbReference type="GO" id="GO:0045039">
    <property type="term" value="P:protein insertion into mitochondrial inner membrane"/>
    <property type="evidence" value="ECO:0000250"/>
    <property type="project" value="PomBase"/>
</dbReference>
<dbReference type="GO" id="GO:0006099">
    <property type="term" value="P:tricarboxylic acid cycle"/>
    <property type="evidence" value="ECO:0000266"/>
    <property type="project" value="ComplexPortal"/>
</dbReference>
<dbReference type="CDD" id="cd03496">
    <property type="entry name" value="SQR_TypeC_CybS"/>
    <property type="match status" value="1"/>
</dbReference>
<dbReference type="FunFam" id="1.20.1300.10:FF:000007">
    <property type="entry name" value="Succinate dehydrogenase [ubiquinone] cytochrome b small subunit"/>
    <property type="match status" value="1"/>
</dbReference>
<dbReference type="Gene3D" id="1.20.1300.10">
    <property type="entry name" value="Fumarate reductase/succinate dehydrogenase, transmembrane subunit"/>
    <property type="match status" value="1"/>
</dbReference>
<dbReference type="InterPro" id="IPR007992">
    <property type="entry name" value="CybS"/>
</dbReference>
<dbReference type="InterPro" id="IPR034804">
    <property type="entry name" value="SQR/QFR_C/D"/>
</dbReference>
<dbReference type="PANTHER" id="PTHR13337">
    <property type="entry name" value="SUCCINATE DEHYDROGENASE"/>
    <property type="match status" value="1"/>
</dbReference>
<dbReference type="PANTHER" id="PTHR13337:SF2">
    <property type="entry name" value="SUCCINATE DEHYDROGENASE [UBIQUINONE] CYTOCHROME B SMALL SUBUNIT, MITOCHONDRIAL"/>
    <property type="match status" value="1"/>
</dbReference>
<dbReference type="Pfam" id="PF05328">
    <property type="entry name" value="CybS"/>
    <property type="match status" value="1"/>
</dbReference>
<dbReference type="SUPFAM" id="SSF81343">
    <property type="entry name" value="Fumarate reductase respiratory complex transmembrane subunits"/>
    <property type="match status" value="1"/>
</dbReference>
<gene>
    <name type="primary">sdh4</name>
    <name type="synonym">tim18</name>
    <name type="ORF">SPBP23A10.16</name>
</gene>
<keyword id="KW-0249">Electron transport</keyword>
<keyword id="KW-0349">Heme</keyword>
<keyword id="KW-0408">Iron</keyword>
<keyword id="KW-0472">Membrane</keyword>
<keyword id="KW-0479">Metal-binding</keyword>
<keyword id="KW-0496">Mitochondrion</keyword>
<keyword id="KW-0999">Mitochondrion inner membrane</keyword>
<keyword id="KW-1185">Reference proteome</keyword>
<keyword id="KW-0809">Transit peptide</keyword>
<keyword id="KW-0812">Transmembrane</keyword>
<keyword id="KW-1133">Transmembrane helix</keyword>
<keyword id="KW-0813">Transport</keyword>
<keyword id="KW-0816">Tricarboxylic acid cycle</keyword>
<name>DHSD_SCHPO</name>
<organism>
    <name type="scientific">Schizosaccharomyces pombe (strain 972 / ATCC 24843)</name>
    <name type="common">Fission yeast</name>
    <dbReference type="NCBI Taxonomy" id="284812"/>
    <lineage>
        <taxon>Eukaryota</taxon>
        <taxon>Fungi</taxon>
        <taxon>Dikarya</taxon>
        <taxon>Ascomycota</taxon>
        <taxon>Taphrinomycotina</taxon>
        <taxon>Schizosaccharomycetes</taxon>
        <taxon>Schizosaccharomycetales</taxon>
        <taxon>Schizosaccharomycetaceae</taxon>
        <taxon>Schizosaccharomyces</taxon>
    </lineage>
</organism>
<accession>Q9P7X0</accession>
<comment type="function">
    <text evidence="1">Membrane-anchoring subunit of succinate dehydrogenase (SDH) that is involved in complex II of the mitochondrial electron transport chain and is responsible for transferring electrons from succinate to ubiquinone (coenzyme Q).</text>
</comment>
<comment type="pathway">
    <text>Carbohydrate metabolism; tricarboxylic acid cycle.</text>
</comment>
<comment type="subunit">
    <text evidence="1">Forms part of complex II containing four subunits: a flavoprotein (FP), an iron-sulfur protein (IP) and a cytochrome b composed of a large and a small subunit.</text>
</comment>
<comment type="subcellular location">
    <subcellularLocation>
        <location evidence="3">Mitochondrion inner membrane</location>
        <topology evidence="3">Multi-pass membrane protein</topology>
    </subcellularLocation>
</comment>
<comment type="induction">
    <text evidence="4">Expression is down-regulated under conditions of iron depletion.</text>
</comment>
<comment type="similarity">
    <text evidence="5">Belongs to the CybS family.</text>
</comment>